<proteinExistence type="evidence at protein level"/>
<keyword id="KW-0961">Cell wall biogenesis/degradation</keyword>
<keyword id="KW-0325">Glycoprotein</keyword>
<keyword id="KW-0328">Glycosyltransferase</keyword>
<keyword id="KW-0333">Golgi apparatus</keyword>
<keyword id="KW-0460">Magnesium</keyword>
<keyword id="KW-0464">Manganese</keyword>
<keyword id="KW-0472">Membrane</keyword>
<keyword id="KW-0479">Metal-binding</keyword>
<keyword id="KW-1185">Reference proteome</keyword>
<keyword id="KW-0735">Signal-anchor</keyword>
<keyword id="KW-0808">Transferase</keyword>
<keyword id="KW-0812">Transmembrane</keyword>
<keyword id="KW-1133">Transmembrane helix</keyword>
<sequence>MGVFSNLRGPKIGLTHEELPVVANGSTSSSSSPSSFKRKVSTFLPICVALVVIIEIGFLCRLDNASLVDTLTHFFTKSSSDLKVGSGIEKCQEWLERVDSVTYSRDFTKDPIFISGSNKDFKSCSVDCVMGFTSDKKPDAAFGLSHQPGTLSIIRSMESAQYYQENNLAQARRKGYDIVMTTSLSSDVPVGYFSWAEYDIMAPVQPKTEKALAAAFISNCAARNFRLQALEALMKTNVKIDSYGGCHRNRDGSVEKVEALKHYKFSLAFENTNEEDYVTEKFFQSLVAGSVPVVVGAPNIEEFAPSPDSFLHIKQMDDVKAVAKKMKYLADNPDAYNQTLRWKHEGPSDSFKALIDMAAVHSSCRLCIFVATRIREQEEKSPEFKRRPCKCTRGSETVYHLYVRERGRFDMESIFLKDGNLTLEALESAVLAKFMSLRYEPIWKKERPASLRGDGKLRVHGIYPIGLTQRQALYNFKFEGNSSLSTHIQRNPCPKFEVVFV</sequence>
<dbReference type="EC" id="2.4.1.214" evidence="3 4 5"/>
<dbReference type="EMBL" id="AJ404860">
    <property type="protein sequence ID" value="CAC38048.1"/>
    <property type="molecule type" value="mRNA"/>
</dbReference>
<dbReference type="EMBL" id="AJ345084">
    <property type="protein sequence ID" value="CAC78979.1"/>
    <property type="molecule type" value="mRNA"/>
</dbReference>
<dbReference type="EMBL" id="AP000419">
    <property type="protein sequence ID" value="BAB02969.1"/>
    <property type="molecule type" value="Genomic_DNA"/>
</dbReference>
<dbReference type="EMBL" id="CP002686">
    <property type="protein sequence ID" value="AEE76217.1"/>
    <property type="molecule type" value="Genomic_DNA"/>
</dbReference>
<dbReference type="EMBL" id="AF277228">
    <property type="protein sequence ID" value="AAM68912.1"/>
    <property type="molecule type" value="mRNA"/>
</dbReference>
<dbReference type="EMBL" id="AF277229">
    <property type="protein sequence ID" value="AAM68913.1"/>
    <property type="molecule type" value="mRNA"/>
</dbReference>
<dbReference type="RefSeq" id="NP_188559.1">
    <property type="nucleotide sequence ID" value="NM_112815.4"/>
</dbReference>
<dbReference type="SMR" id="Q9LJK1"/>
<dbReference type="BioGRID" id="6795">
    <property type="interactions" value="1"/>
</dbReference>
<dbReference type="FunCoup" id="Q9LJK1">
    <property type="interactions" value="300"/>
</dbReference>
<dbReference type="STRING" id="3702.Q9LJK1"/>
<dbReference type="CAZy" id="GT10">
    <property type="family name" value="Glycosyltransferase Family 10"/>
</dbReference>
<dbReference type="GlyCosmos" id="Q9LJK1">
    <property type="glycosylation" value="4 sites, No reported glycans"/>
</dbReference>
<dbReference type="GlyGen" id="Q9LJK1">
    <property type="glycosylation" value="4 sites"/>
</dbReference>
<dbReference type="iPTMnet" id="Q9LJK1"/>
<dbReference type="PaxDb" id="3702-AT3G19280.1"/>
<dbReference type="ProteomicsDB" id="230439"/>
<dbReference type="EnsemblPlants" id="AT3G19280.1">
    <property type="protein sequence ID" value="AT3G19280.1"/>
    <property type="gene ID" value="AT3G19280"/>
</dbReference>
<dbReference type="GeneID" id="821462"/>
<dbReference type="Gramene" id="AT3G19280.1">
    <property type="protein sequence ID" value="AT3G19280.1"/>
    <property type="gene ID" value="AT3G19280"/>
</dbReference>
<dbReference type="KEGG" id="ath:AT3G19280"/>
<dbReference type="Araport" id="AT3G19280"/>
<dbReference type="TAIR" id="AT3G19280">
    <property type="gene designation" value="FUT11"/>
</dbReference>
<dbReference type="eggNOG" id="KOG2619">
    <property type="taxonomic scope" value="Eukaryota"/>
</dbReference>
<dbReference type="HOGENOM" id="CLU_040484_0_0_1"/>
<dbReference type="InParanoid" id="Q9LJK1"/>
<dbReference type="OMA" id="VERCEEW"/>
<dbReference type="PhylomeDB" id="Q9LJK1"/>
<dbReference type="BioCyc" id="ARA:AT3G19280-MONOMER"/>
<dbReference type="BioCyc" id="MetaCyc:AT3G19280-MONOMER"/>
<dbReference type="BRENDA" id="2.4.1.214">
    <property type="organism ID" value="399"/>
</dbReference>
<dbReference type="UniPathway" id="UPA00378"/>
<dbReference type="PRO" id="PR:Q9LJK1"/>
<dbReference type="Proteomes" id="UP000006548">
    <property type="component" value="Chromosome 3"/>
</dbReference>
<dbReference type="ExpressionAtlas" id="Q9LJK1">
    <property type="expression patterns" value="baseline and differential"/>
</dbReference>
<dbReference type="GO" id="GO:0005794">
    <property type="term" value="C:Golgi apparatus"/>
    <property type="evidence" value="ECO:0000304"/>
    <property type="project" value="UniProtKB"/>
</dbReference>
<dbReference type="GO" id="GO:0032580">
    <property type="term" value="C:Golgi cisterna membrane"/>
    <property type="evidence" value="ECO:0007669"/>
    <property type="project" value="UniProtKB-SubCell"/>
</dbReference>
<dbReference type="GO" id="GO:0046920">
    <property type="term" value="F:alpha-(1-&gt;3)-fucosyltransferase activity"/>
    <property type="evidence" value="ECO:0000314"/>
    <property type="project" value="TAIR"/>
</dbReference>
<dbReference type="GO" id="GO:0008417">
    <property type="term" value="F:fucosyltransferase activity"/>
    <property type="evidence" value="ECO:0000250"/>
    <property type="project" value="TAIR"/>
</dbReference>
<dbReference type="GO" id="GO:0018392">
    <property type="term" value="F:glycoprotein 3-alpha-L-fucosyltransferase activity"/>
    <property type="evidence" value="ECO:0000304"/>
    <property type="project" value="UniProtKB"/>
</dbReference>
<dbReference type="GO" id="GO:0046872">
    <property type="term" value="F:metal ion binding"/>
    <property type="evidence" value="ECO:0007669"/>
    <property type="project" value="UniProtKB-KW"/>
</dbReference>
<dbReference type="GO" id="GO:0071555">
    <property type="term" value="P:cell wall organization"/>
    <property type="evidence" value="ECO:0007669"/>
    <property type="project" value="UniProtKB-KW"/>
</dbReference>
<dbReference type="GO" id="GO:0042355">
    <property type="term" value="P:L-fucose catabolic process"/>
    <property type="evidence" value="ECO:0000303"/>
    <property type="project" value="UniProtKB"/>
</dbReference>
<dbReference type="GO" id="GO:0006486">
    <property type="term" value="P:protein glycosylation"/>
    <property type="evidence" value="ECO:0000304"/>
    <property type="project" value="UniProtKB"/>
</dbReference>
<dbReference type="GO" id="GO:0006487">
    <property type="term" value="P:protein N-linked glycosylation"/>
    <property type="evidence" value="ECO:0000314"/>
    <property type="project" value="TAIR"/>
</dbReference>
<dbReference type="FunFam" id="3.40.50.11660:FF:000005">
    <property type="entry name" value="Glycoprotein 3-alpha-L-fucosyltransferase A"/>
    <property type="match status" value="1"/>
</dbReference>
<dbReference type="Gene3D" id="3.40.50.11660">
    <property type="entry name" value="Glycosyl transferase family 10, C-terminal domain"/>
    <property type="match status" value="1"/>
</dbReference>
<dbReference type="InterPro" id="IPR055270">
    <property type="entry name" value="Glyco_tran_10_C"/>
</dbReference>
<dbReference type="InterPro" id="IPR001503">
    <property type="entry name" value="Glyco_trans_10"/>
</dbReference>
<dbReference type="InterPro" id="IPR038577">
    <property type="entry name" value="GT10-like_C_sf"/>
</dbReference>
<dbReference type="PANTHER" id="PTHR11929">
    <property type="entry name" value="ALPHA- 1,3 -FUCOSYLTRANSFERASE"/>
    <property type="match status" value="1"/>
</dbReference>
<dbReference type="PANTHER" id="PTHR11929:SF218">
    <property type="entry name" value="GLYCOPROTEIN 3-ALPHA-L-FUCOSYLTRANSFERASE A"/>
    <property type="match status" value="1"/>
</dbReference>
<dbReference type="Pfam" id="PF00852">
    <property type="entry name" value="Glyco_transf_10"/>
    <property type="match status" value="1"/>
</dbReference>
<dbReference type="SUPFAM" id="SSF53756">
    <property type="entry name" value="UDP-Glycosyltransferase/glycogen phosphorylase"/>
    <property type="match status" value="1"/>
</dbReference>
<feature type="chain" id="PRO_0000221124" description="Glycoprotein 3-alpha-L-fucosyltransferase A">
    <location>
        <begin position="1"/>
        <end position="501"/>
    </location>
</feature>
<feature type="topological domain" description="Cytoplasmic" evidence="2">
    <location>
        <begin position="1"/>
        <end position="39"/>
    </location>
</feature>
<feature type="transmembrane region" description="Helical; Signal-anchor for type II membrane protein" evidence="2">
    <location>
        <begin position="40"/>
        <end position="60"/>
    </location>
</feature>
<feature type="topological domain" description="Lumenal" evidence="2">
    <location>
        <begin position="61"/>
        <end position="501"/>
    </location>
</feature>
<feature type="site" description="May be important for donor substrate binding" evidence="5">
    <location>
        <position position="218"/>
    </location>
</feature>
<feature type="site" description="May be important for donor substrate binding" evidence="5">
    <location>
        <position position="219"/>
    </location>
</feature>
<feature type="site" description="May be important for donor substrate binding" evidence="5">
    <location>
        <position position="226"/>
    </location>
</feature>
<feature type="site" description="May be important for donor substrate binding" evidence="5">
    <location>
        <position position="243"/>
    </location>
</feature>
<feature type="glycosylation site" description="N-linked (GlcNAc...) asparagine" evidence="2">
    <location>
        <position position="64"/>
    </location>
</feature>
<feature type="glycosylation site" description="N-linked (GlcNAc...) asparagine" evidence="2 5">
    <location>
        <position position="337"/>
    </location>
</feature>
<feature type="glycosylation site" description="N-linked (GlcNAc...) asparagine" evidence="2 5">
    <location>
        <position position="420"/>
    </location>
</feature>
<feature type="glycosylation site" description="N-linked (GlcNAc...) asparagine" evidence="2 5">
    <location>
        <position position="481"/>
    </location>
</feature>
<feature type="mutagenesis site" description="Loss of catalytic activity." evidence="5">
    <original>S</original>
    <variation>A</variation>
    <location>
        <position position="218"/>
    </location>
</feature>
<feature type="mutagenesis site" description="Loss of catalytic activity associated with a 3-fold decrease in affinity for GDP-fucose." evidence="5">
    <original>N</original>
    <variation>A</variation>
    <location>
        <position position="219"/>
    </location>
</feature>
<feature type="mutagenesis site" description="Loss of catalytic activity." evidence="5">
    <original>R</original>
    <variation>A</variation>
    <location>
        <position position="226"/>
    </location>
</feature>
<feature type="mutagenesis site" description="90 percent decrease in catalytic activity associated with a 2.4-fold decrease in affinity for GDP-fucose." evidence="5">
    <original>Y</original>
    <variation>A</variation>
    <location>
        <position position="243"/>
    </location>
</feature>
<feature type="mutagenesis site" description="65 percent decrease in catalytic activity with no decrease in affinity for GDP-fucose." evidence="5">
    <original>S</original>
    <variation>A</variation>
    <location>
        <position position="253"/>
    </location>
</feature>
<feature type="mutagenesis site" description="80 percent decrease in catalytic activity." evidence="5">
    <original>N</original>
    <variation>A</variation>
    <location>
        <position position="337"/>
    </location>
</feature>
<feature type="mutagenesis site" description="90 percent decrease in catalytic activity associated with a 3.6-fold decrease in affinity for GDP-fucose. 95 percent decrease in catalytic activity; when associated with A-422 and A-483." evidence="5">
    <original>T</original>
    <variation>A</variation>
    <location>
        <position position="339"/>
    </location>
</feature>
<feature type="mutagenesis site" description="65 percent decrease in catalytic activity. 95 percent decrease in catalytic activity; when associated with A-339 and A-483." evidence="5">
    <original>T</original>
    <variation>A</variation>
    <location>
        <position position="422"/>
    </location>
</feature>
<feature type="mutagenesis site" description="70 percent decrease in catalytic activity. 95 percent decrease in catalytic activity; when associated with A-339 and A-422." evidence="5">
    <original>S</original>
    <variation>A</variation>
    <location>
        <position position="483"/>
    </location>
</feature>
<feature type="sequence conflict" description="In Ref. 5; AAM68912." evidence="6" ref="5">
    <original>K</original>
    <variation>E</variation>
    <location>
        <position position="210"/>
    </location>
</feature>
<protein>
    <recommendedName>
        <fullName>Glycoprotein 3-alpha-L-fucosyltransferase A</fullName>
        <ecNumber evidence="3 4 5">2.4.1.214</ecNumber>
    </recommendedName>
    <alternativeName>
        <fullName>Core alpha-(1,3)-fucosyltransferase</fullName>
    </alternativeName>
    <alternativeName>
        <fullName>Fuc-T C3</fullName>
    </alternativeName>
    <alternativeName>
        <fullName>FucT1</fullName>
    </alternativeName>
    <alternativeName>
        <fullName>FucTA</fullName>
    </alternativeName>
    <alternativeName>
        <fullName>Fucosyltransferase 11</fullName>
        <shortName>AtFUT11</shortName>
    </alternativeName>
</protein>
<reference key="1">
    <citation type="journal article" date="2001" name="Biochim. Biophys. Acta">
        <title>Cloning and expression of cDNAs encoding alpha1,3-fucosyltransferase homologues from Arabidopsis thaliana.</title>
        <authorList>
            <person name="Wilson I.B."/>
            <person name="Rendic D."/>
            <person name="Freilinger A."/>
            <person name="Dumic J."/>
            <person name="Altmann F."/>
            <person name="Mucha J."/>
            <person name="Muller S."/>
            <person name="Hauser M.T."/>
        </authorList>
    </citation>
    <scope>NUCLEOTIDE SEQUENCE [MRNA]</scope>
    <scope>CATALYTIC ACTIVITY</scope>
    <source>
        <strain>cv. Columbia</strain>
        <tissue>Root</tissue>
    </source>
</reference>
<reference key="2">
    <citation type="journal article" date="2001" name="FEBS Lett.">
        <title>Plant members of the alpha1--&gt;3/4-fucosyltransferase gene family encode an alpha1--&gt;4-fucosyltransferase, potentially involved in Lewis(a) biosynthesis, and two core alpha1--&gt;3-fucosyltransferases.</title>
        <authorList>
            <person name="Bakker H."/>
            <person name="Schijlen E."/>
            <person name="de Vries T."/>
            <person name="Schiphorst W.E."/>
            <person name="Jordi W."/>
            <person name="Lommen A."/>
            <person name="Bosch D."/>
            <person name="van Die I."/>
        </authorList>
    </citation>
    <scope>NUCLEOTIDE SEQUENCE [MRNA]</scope>
    <scope>CATALYTIC ACTIVITY</scope>
    <source>
        <strain>cv. Columbia</strain>
        <tissue>Silique</tissue>
    </source>
</reference>
<reference key="3">
    <citation type="journal article" date="2000" name="DNA Res.">
        <title>Structural analysis of Arabidopsis thaliana chromosome 3. II. Sequence features of the 4,251,695 bp regions covered by 90 P1, TAC and BAC clones.</title>
        <authorList>
            <person name="Kaneko T."/>
            <person name="Katoh T."/>
            <person name="Sato S."/>
            <person name="Nakamura Y."/>
            <person name="Asamizu E."/>
            <person name="Tabata S."/>
        </authorList>
    </citation>
    <scope>NUCLEOTIDE SEQUENCE [LARGE SCALE GENOMIC DNA]</scope>
    <source>
        <strain>cv. Columbia</strain>
    </source>
</reference>
<reference key="4">
    <citation type="journal article" date="2017" name="Plant J.">
        <title>Araport11: a complete reannotation of the Arabidopsis thaliana reference genome.</title>
        <authorList>
            <person name="Cheng C.Y."/>
            <person name="Krishnakumar V."/>
            <person name="Chan A.P."/>
            <person name="Thibaud-Nissen F."/>
            <person name="Schobel S."/>
            <person name="Town C.D."/>
        </authorList>
    </citation>
    <scope>GENOME REANNOTATION</scope>
    <source>
        <strain>cv. Columbia</strain>
    </source>
</reference>
<reference key="5">
    <citation type="submission" date="2000-06" db="EMBL/GenBank/DDBJ databases">
        <authorList>
            <person name="Kiefer-Meyer M.-C."/>
            <person name="Faye L."/>
            <person name="Gomord V."/>
        </authorList>
    </citation>
    <scope>NUCLEOTIDE SEQUENCE OF 26-287</scope>
    <source>
        <strain>cv. Wassilewskija</strain>
    </source>
</reference>
<reference key="6">
    <citation type="journal article" date="2011" name="Glycobiology">
        <title>Distantly related plant and nematode core alpha1,3-fucosyltransferases display similar trends in structure-function relationships.</title>
        <authorList>
            <person name="Both P."/>
            <person name="Sobczak L."/>
            <person name="Breton C."/>
            <person name="Hann S."/>
            <person name="Noebauer K."/>
            <person name="Paschinger K."/>
            <person name="Kozmon S."/>
            <person name="Mucha J."/>
            <person name="Wilson I.B."/>
        </authorList>
    </citation>
    <scope>FUNCTION</scope>
    <scope>CATALYTIC ACTIVITY</scope>
    <scope>COFACTOR</scope>
    <scope>ACTIVITY REGULATION</scope>
    <scope>BIOPHYSICOCHEMICAL PROPERTIES</scope>
    <scope>DOMAIN</scope>
    <scope>GLYCOSYLATION AT ASN-337; ASN-420 AND ASN-481</scope>
    <scope>MUTAGENESIS OF SER-218; ASN-219; ARG-226; TYR-243; SER-253; ASN-337; THR-339; THR-422 AND SER-483</scope>
</reference>
<organism>
    <name type="scientific">Arabidopsis thaliana</name>
    <name type="common">Mouse-ear cress</name>
    <dbReference type="NCBI Taxonomy" id="3702"/>
    <lineage>
        <taxon>Eukaryota</taxon>
        <taxon>Viridiplantae</taxon>
        <taxon>Streptophyta</taxon>
        <taxon>Embryophyta</taxon>
        <taxon>Tracheophyta</taxon>
        <taxon>Spermatophyta</taxon>
        <taxon>Magnoliopsida</taxon>
        <taxon>eudicotyledons</taxon>
        <taxon>Gunneridae</taxon>
        <taxon>Pentapetalae</taxon>
        <taxon>rosids</taxon>
        <taxon>malvids</taxon>
        <taxon>Brassicales</taxon>
        <taxon>Brassicaceae</taxon>
        <taxon>Camelineae</taxon>
        <taxon>Arabidopsis</taxon>
    </lineage>
</organism>
<comment type="function">
    <text evidence="3 4 5 6">Involved in cell wall synthesis (Probable). Preferentially catalyzes the addition of fucose in alpha 1-3 linkage to the first GlcNAc residue next to the peptide chains in N-glycans (PubMed:11420147, PubMed:11696361, PubMed:21515584).</text>
</comment>
<comment type="catalytic activity">
    <reaction evidence="3 4 5">
        <text>N(4)-{beta-D-GlcNAc-(1-&gt;2)-alpha-D-Man-(1-&gt;3)-[beta-D-GlcNAc-(1-&gt;2)-alpha-D-Man-(1-&gt;6)]-beta-D-Man-(1-&gt;4)-beta-D-GlcNAc-(1-&gt;4)-beta-D-GlcNAc}-L-asparaginyl-[protein] + GDP-beta-L-fucose = N(4)-{beta-D-GlcNAc-(1-&gt;2)-alpha-D-Man-(1-&gt;3)-[beta-D-GlcNAc-(1-&gt;2)-alpha-D-Man-(1-&gt;6)]-beta-D-Man-(1-&gt;4)-beta-D-GlcNAc-(1-&gt;4)-[alpha-L-Fuc(1-&gt;3)]-beta-D-GlcNAc}-L-asparaginyl-[protein] + GDP + H(+)</text>
        <dbReference type="Rhea" id="RHEA:24444"/>
        <dbReference type="Rhea" id="RHEA-COMP:13526"/>
        <dbReference type="Rhea" id="RHEA-COMP:13529"/>
        <dbReference type="ChEBI" id="CHEBI:15378"/>
        <dbReference type="ChEBI" id="CHEBI:57273"/>
        <dbReference type="ChEBI" id="CHEBI:58189"/>
        <dbReference type="ChEBI" id="CHEBI:60651"/>
        <dbReference type="ChEBI" id="CHEBI:137182"/>
        <dbReference type="EC" id="2.4.1.214"/>
    </reaction>
</comment>
<comment type="cofactor">
    <cofactor evidence="5">
        <name>Mg(2+)</name>
        <dbReference type="ChEBI" id="CHEBI:18420"/>
    </cofactor>
    <cofactor evidence="5">
        <name>Mn(2+)</name>
        <dbReference type="ChEBI" id="CHEBI:29035"/>
    </cofactor>
    <text evidence="5">Can also use Co(2+), Ca(2+) or Ni(2+) in vitro.</text>
</comment>
<comment type="activity regulation">
    <text evidence="5">Inhibited by Cu(2+) and Zn(2+).</text>
</comment>
<comment type="biophysicochemical properties">
    <kinetics>
        <KM evidence="5">0.1 mM for GDP-fucose (at pH 6.0 and 30 degrees Celsius)</KM>
        <KM evidence="5">15 uM for NST-GlcNAc-beta-1-2Man-alpha-1-6(GlcNAc-beta-1-2Man-alpha-1-3)Man-beta-1-4GlcNAc-beta-1-4GlcNAc (GnGn) (at pH 6.0 and 30 degrees Celsius)</KM>
    </kinetics>
</comment>
<comment type="pathway">
    <text>Protein modification; protein glycosylation.</text>
</comment>
<comment type="subcellular location">
    <subcellularLocation>
        <location evidence="1">Golgi apparatus</location>
        <location evidence="1">Golgi stack membrane</location>
        <topology evidence="1">Single-pass type II membrane protein</topology>
    </subcellularLocation>
    <text evidence="1">Membrane-bound form in trans cisternae of Golgi.</text>
</comment>
<comment type="domain">
    <text evidence="5">The C-terminus (388-501) is important for catalytic activity or for enzyme stability. The N-terminus (1-89) appears to be dispensable for enzymatic activity.</text>
</comment>
<comment type="PTM">
    <text evidence="5">Glycosylation may be important for enzymatic activity.</text>
</comment>
<comment type="similarity">
    <text evidence="6">Belongs to the glycosyltransferase 10 family.</text>
</comment>
<accession>Q9LJK1</accession>
<evidence type="ECO:0000250" key="1"/>
<evidence type="ECO:0000255" key="2"/>
<evidence type="ECO:0000269" key="3">
    <source>
    </source>
</evidence>
<evidence type="ECO:0000269" key="4">
    <source>
    </source>
</evidence>
<evidence type="ECO:0000269" key="5">
    <source>
    </source>
</evidence>
<evidence type="ECO:0000305" key="6"/>
<name>FUT11_ARATH</name>
<gene>
    <name type="primary">FUT11</name>
    <name type="ordered locus">At3g19280</name>
    <name type="ORF">MVI11.20</name>
</gene>